<proteinExistence type="evidence at protein level"/>
<reference evidence="7" key="1">
    <citation type="submission" date="2003-03" db="EMBL/GenBank/DDBJ databases">
        <title>The complete genome sequence of Neisseria gonorrhoeae.</title>
        <authorList>
            <person name="Lewis L.A."/>
            <person name="Gillaspy A.F."/>
            <person name="McLaughlin R.E."/>
            <person name="Gipson M."/>
            <person name="Ducey T.F."/>
            <person name="Ownbey T."/>
            <person name="Hartman K."/>
            <person name="Nydick C."/>
            <person name="Carson M.B."/>
            <person name="Vaughn J."/>
            <person name="Thomson C."/>
            <person name="Song L."/>
            <person name="Lin S."/>
            <person name="Yuan X."/>
            <person name="Najar F."/>
            <person name="Zhan M."/>
            <person name="Ren Q."/>
            <person name="Zhu H."/>
            <person name="Qi S."/>
            <person name="Kenton S.M."/>
            <person name="Lai H."/>
            <person name="White J.D."/>
            <person name="Clifton S."/>
            <person name="Roe B.A."/>
            <person name="Dyer D.W."/>
        </authorList>
    </citation>
    <scope>NUCLEOTIDE SEQUENCE [LARGE SCALE GENOMIC DNA]</scope>
    <source>
        <strain>ATCC 700825 / FA 1090</strain>
    </source>
</reference>
<reference key="2">
    <citation type="journal article" date="2011" name="BMC Microbiol.">
        <title>A bacterial PriB with weak single-stranded DNA binding activity can stimulate the DNA unwinding activity of its cognate PriA helicase.</title>
        <authorList>
            <person name="Feng C."/>
            <person name="Sunchu B."/>
            <person name="Greenwood M.E."/>
            <person name="Lopper M.E."/>
        </authorList>
    </citation>
    <scope>FUNCTION</scope>
    <scope>INTERACTION WITH PRIA</scope>
    <scope>DNA-BINDING</scope>
    <scope>MUTAGENESIS OF LYS-34</scope>
    <source>
        <strain>ATCC 700825 / FA 1090</strain>
    </source>
</reference>
<reference key="3">
    <citation type="journal article" date="2012" name="Biochemistry">
        <title>Identification of a small molecule PriA helicase inhibitor.</title>
        <authorList>
            <person name="Sunchu B."/>
            <person name="Berg L."/>
            <person name="Ward H.E."/>
            <person name="Lopper M.E."/>
        </authorList>
    </citation>
    <scope>FUNCTION</scope>
    <scope>ACTIVITY REGULATION</scope>
    <source>
        <strain>ATCC 700825 / FA 1090</strain>
    </source>
</reference>
<reference evidence="8" key="4">
    <citation type="journal article" date="2010" name="Nucleic Acids Res.">
        <title>The crystal structure of Neisseria gonorrhoeae PriB reveals mechanistic differences among bacterial DNA replication restart pathways.</title>
        <authorList>
            <person name="Dong J."/>
            <person name="George N.P."/>
            <person name="Duckett K.L."/>
            <person name="DeBeer M.A."/>
            <person name="Lopper M.E."/>
        </authorList>
    </citation>
    <scope>X-RAY CRYSTALLOGRAPHY (2.70 ANGSTROMS)</scope>
    <scope>DNA-BINDING</scope>
    <scope>INTERACTION WITH PRIA</scope>
    <scope>SUBUNIT</scope>
    <scope>MUTAGENESIS OF TYR-21; LYS-34; GLU-41 AND LYS-81</scope>
    <source>
        <strain>ATCC 700825 / FA 1090</strain>
    </source>
</reference>
<evidence type="ECO:0000255" key="1">
    <source>
        <dbReference type="HAMAP-Rule" id="MF_00720"/>
    </source>
</evidence>
<evidence type="ECO:0000269" key="2">
    <source>
    </source>
</evidence>
<evidence type="ECO:0000269" key="3">
    <source>
    </source>
</evidence>
<evidence type="ECO:0000269" key="4">
    <source>
    </source>
</evidence>
<evidence type="ECO:0000303" key="5">
    <source>
    </source>
</evidence>
<evidence type="ECO:0000305" key="6"/>
<evidence type="ECO:0000312" key="7">
    <source>
        <dbReference type="EMBL" id="AAW89313.1"/>
    </source>
</evidence>
<evidence type="ECO:0007744" key="8">
    <source>
        <dbReference type="PDB" id="3K8A"/>
    </source>
</evidence>
<evidence type="ECO:0007829" key="9">
    <source>
        <dbReference type="PDB" id="3K8A"/>
    </source>
</evidence>
<keyword id="KW-0002">3D-structure</keyword>
<keyword id="KW-0235">DNA replication</keyword>
<keyword id="KW-0238">DNA-binding</keyword>
<keyword id="KW-0639">Primosome</keyword>
<keyword id="KW-1185">Reference proteome</keyword>
<dbReference type="EMBL" id="AE004969">
    <property type="protein sequence ID" value="AAW89313.1"/>
    <property type="molecule type" value="Genomic_DNA"/>
</dbReference>
<dbReference type="RefSeq" id="WP_003692950.1">
    <property type="nucleotide sequence ID" value="NC_002946.2"/>
</dbReference>
<dbReference type="RefSeq" id="YP_207725.1">
    <property type="nucleotide sequence ID" value="NC_002946.2"/>
</dbReference>
<dbReference type="PDB" id="3K8A">
    <property type="method" value="X-ray"/>
    <property type="resolution" value="2.70 A"/>
    <property type="chains" value="A/B=1-100"/>
</dbReference>
<dbReference type="PDBsum" id="3K8A"/>
<dbReference type="SMR" id="Q5F924"/>
<dbReference type="STRING" id="242231.NGO_0582"/>
<dbReference type="DNASU" id="3282384"/>
<dbReference type="KEGG" id="ngo:NGO_0582"/>
<dbReference type="PATRIC" id="fig|242231.10.peg.688"/>
<dbReference type="HOGENOM" id="CLU_166075_1_2_4"/>
<dbReference type="EvolutionaryTrace" id="Q5F924"/>
<dbReference type="Proteomes" id="UP000000535">
    <property type="component" value="Chromosome"/>
</dbReference>
<dbReference type="GO" id="GO:1990099">
    <property type="term" value="C:pre-primosome complex"/>
    <property type="evidence" value="ECO:0000250"/>
    <property type="project" value="UniProtKB"/>
</dbReference>
<dbReference type="GO" id="GO:0001671">
    <property type="term" value="F:ATPase activator activity"/>
    <property type="evidence" value="ECO:0000314"/>
    <property type="project" value="UniProtKB"/>
</dbReference>
<dbReference type="GO" id="GO:0051117">
    <property type="term" value="F:ATPase binding"/>
    <property type="evidence" value="ECO:0000353"/>
    <property type="project" value="UniProtKB"/>
</dbReference>
<dbReference type="GO" id="GO:0003690">
    <property type="term" value="F:double-stranded DNA binding"/>
    <property type="evidence" value="ECO:0000314"/>
    <property type="project" value="UniProtKB"/>
</dbReference>
<dbReference type="GO" id="GO:0042803">
    <property type="term" value="F:protein homodimerization activity"/>
    <property type="evidence" value="ECO:0000314"/>
    <property type="project" value="UniProtKB"/>
</dbReference>
<dbReference type="GO" id="GO:0003697">
    <property type="term" value="F:single-stranded DNA binding"/>
    <property type="evidence" value="ECO:0000314"/>
    <property type="project" value="UniProtKB"/>
</dbReference>
<dbReference type="GO" id="GO:0006269">
    <property type="term" value="P:DNA replication, synthesis of primer"/>
    <property type="evidence" value="ECO:0007669"/>
    <property type="project" value="UniProtKB-KW"/>
</dbReference>
<dbReference type="Gene3D" id="2.40.50.140">
    <property type="entry name" value="Nucleic acid-binding proteins"/>
    <property type="match status" value="1"/>
</dbReference>
<dbReference type="HAMAP" id="MF_00720">
    <property type="entry name" value="PriB"/>
    <property type="match status" value="1"/>
</dbReference>
<dbReference type="InterPro" id="IPR012340">
    <property type="entry name" value="NA-bd_OB-fold"/>
</dbReference>
<dbReference type="InterPro" id="IPR000424">
    <property type="entry name" value="Primosome_PriB/ssb"/>
</dbReference>
<dbReference type="InterPro" id="IPR023646">
    <property type="entry name" value="Prisomal_replication_PriB"/>
</dbReference>
<dbReference type="NCBIfam" id="TIGR04418">
    <property type="entry name" value="PriB_gamma"/>
    <property type="match status" value="1"/>
</dbReference>
<dbReference type="Pfam" id="PF22657">
    <property type="entry name" value="SSB_1"/>
    <property type="match status" value="1"/>
</dbReference>
<dbReference type="PIRSF" id="PIRSF003135">
    <property type="entry name" value="Primosomal_n"/>
    <property type="match status" value="1"/>
</dbReference>
<dbReference type="SUPFAM" id="SSF50249">
    <property type="entry name" value="Nucleic acid-binding proteins"/>
    <property type="match status" value="1"/>
</dbReference>
<dbReference type="PROSITE" id="PS50935">
    <property type="entry name" value="SSB"/>
    <property type="match status" value="1"/>
</dbReference>
<feature type="chain" id="PRO_0000436555" description="Replication restart protein PriB">
    <location>
        <begin position="1"/>
        <end position="100"/>
    </location>
</feature>
<feature type="domain" description="SSB" evidence="1">
    <location>
        <begin position="4"/>
        <end position="99"/>
    </location>
</feature>
<feature type="mutagenesis site" description="1.3-fold lower single-stranded DNA-binding activity than wild-type." evidence="2">
    <original>Y</original>
    <variation>A</variation>
    <location>
        <position position="21"/>
    </location>
</feature>
<feature type="mutagenesis site" description="Significantly lower single-stranded DNA-binding activity. No effect on the levels of DNA unwinding activity of PriA." evidence="2 3">
    <original>K</original>
    <variation>A</variation>
    <location>
        <position position="34"/>
    </location>
</feature>
<feature type="mutagenesis site" description="3.4-fold higher single-stranded DNA-binding activity." evidence="2">
    <original>E</original>
    <variation>A</variation>
    <location>
        <position position="41"/>
    </location>
</feature>
<feature type="mutagenesis site" description="Significantly lower single-stranded DNA-binding activity." evidence="2">
    <original>K</original>
    <variation>A</variation>
    <location>
        <position position="81"/>
    </location>
</feature>
<feature type="strand" evidence="9">
    <location>
        <begin position="5"/>
        <end position="16"/>
    </location>
</feature>
<feature type="strand" evidence="9">
    <location>
        <begin position="27"/>
        <end position="41"/>
    </location>
</feature>
<feature type="strand" evidence="9">
    <location>
        <begin position="44"/>
        <end position="57"/>
    </location>
</feature>
<feature type="helix" evidence="9">
    <location>
        <begin position="58"/>
        <end position="63"/>
    </location>
</feature>
<feature type="strand" evidence="9">
    <location>
        <begin position="71"/>
        <end position="84"/>
    </location>
</feature>
<feature type="strand" evidence="9">
    <location>
        <begin position="88"/>
        <end position="97"/>
    </location>
</feature>
<comment type="function">
    <text evidence="2 3 4">Stimulates the DNA unwinding activity of PriA helicase, which does not seem to require single-stranded (ss)DNA-binding by PriB. Activates DNA-dependent ATP hydrolysis catalyzed by PriA (PubMed:21861872, PubMed:23193948). Weakly binds ssDNA (PubMed:19906704, PubMed:21861872). Weakly binds double-stranded (ds)DNA, a partial duplex DNA with a 3' ssDNA overhang, and a forked DNA structure with fully duplex leading and lagging strand arms in vitro (PubMed:21861872).</text>
</comment>
<comment type="function">
    <text evidence="1">Involved in the restart of stalled replication forks, which reloads the replicative helicase on sites other than the origin of replication; the PriA-PriB pathway is the major replication restart pathway. During primosome assembly it facilitates complex formation between PriA and DnaT on DNA; stabilizes PriA on DNA. Stimulates the DNA unwinding activity of PriA helicase.</text>
</comment>
<comment type="activity regulation">
    <text evidence="4">PriA:PriB complex-catalyzed duplex DNA winding is inhibited by CGS 15943 (CHEBI:131351); PriA is the drug target (PubMed:23193948).</text>
</comment>
<comment type="subunit">
    <text evidence="1 2 3">Homodimer (PubMed:19906704). Component of the replication restart primosome. Primosome assembly occurs via a 'hand-off' mechanism. PriA binds to replication forks, subsequently PriB then DnaT bind; DnaT then displaces ssDNA to generate the helicase loading substrate. Interacts with PriA with high affinity, independent of DNA presence (PubMed:19906704, PubMed:21861872).</text>
</comment>
<comment type="similarity">
    <text evidence="1 6">Belongs to the PriB family.</text>
</comment>
<organism>
    <name type="scientific">Neisseria gonorrhoeae (strain ATCC 700825 / FA 1090)</name>
    <dbReference type="NCBI Taxonomy" id="242231"/>
    <lineage>
        <taxon>Bacteria</taxon>
        <taxon>Pseudomonadati</taxon>
        <taxon>Pseudomonadota</taxon>
        <taxon>Betaproteobacteria</taxon>
        <taxon>Neisseriales</taxon>
        <taxon>Neisseriaceae</taxon>
        <taxon>Neisseria</taxon>
    </lineage>
</organism>
<gene>
    <name evidence="1 5" type="primary">priB</name>
    <name evidence="7" type="ordered locus">NGO_0582</name>
</gene>
<accession>Q5F924</accession>
<name>PRIB_NEIG1</name>
<sequence>MGFTNLVSLAALIEKAFPIRYTPAGIPVLDIILKHESWQEENGQQCLVQLEIPARILGRQAEEWQYRQGDCATVEGFLAQKSRRSLMPMLRIQNIKEYKG</sequence>
<protein>
    <recommendedName>
        <fullName evidence="1">Replication restart protein PriB</fullName>
    </recommendedName>
    <alternativeName>
        <fullName evidence="5">Primosome protein PriB</fullName>
    </alternativeName>
</protein>